<feature type="chain" id="PRO_0000299330" description="Putative phosphoesterase BLi01284/BL02661">
    <location>
        <begin position="1"/>
        <end position="169"/>
    </location>
</feature>
<feature type="short sequence motif" description="HXTX 1" evidence="1">
    <location>
        <begin position="34"/>
        <end position="37"/>
    </location>
</feature>
<feature type="short sequence motif" description="HXTX 2" evidence="1">
    <location>
        <begin position="115"/>
        <end position="118"/>
    </location>
</feature>
<feature type="active site" description="Proton donor" evidence="1">
    <location>
        <position position="34"/>
    </location>
</feature>
<feature type="active site" description="Proton acceptor" evidence="1">
    <location>
        <position position="115"/>
    </location>
</feature>
<gene>
    <name type="ordered locus">BLi01284</name>
    <name type="ordered locus">BL02661</name>
</gene>
<evidence type="ECO:0000255" key="1">
    <source>
        <dbReference type="HAMAP-Rule" id="MF_01444"/>
    </source>
</evidence>
<organism>
    <name type="scientific">Bacillus licheniformis (strain ATCC 14580 / DSM 13 / JCM 2505 / CCUG 7422 / NBRC 12200 / NCIMB 9375 / NCTC 10341 / NRRL NRS-1264 / Gibson 46)</name>
    <dbReference type="NCBI Taxonomy" id="279010"/>
    <lineage>
        <taxon>Bacteria</taxon>
        <taxon>Bacillati</taxon>
        <taxon>Bacillota</taxon>
        <taxon>Bacilli</taxon>
        <taxon>Bacillales</taxon>
        <taxon>Bacillaceae</taxon>
        <taxon>Bacillus</taxon>
    </lineage>
</organism>
<protein>
    <recommendedName>
        <fullName evidence="1">Putative phosphoesterase BLi01284/BL02661</fullName>
        <ecNumber evidence="1">3.1.-.-</ecNumber>
    </recommendedName>
</protein>
<dbReference type="EC" id="3.1.-.-" evidence="1"/>
<dbReference type="EMBL" id="CP000002">
    <property type="protein sequence ID" value="AAU22845.1"/>
    <property type="molecule type" value="Genomic_DNA"/>
</dbReference>
<dbReference type="EMBL" id="AE017333">
    <property type="protein sequence ID" value="AAU40190.1"/>
    <property type="molecule type" value="Genomic_DNA"/>
</dbReference>
<dbReference type="RefSeq" id="WP_009328796.1">
    <property type="nucleotide sequence ID" value="NC_006322.1"/>
</dbReference>
<dbReference type="SMR" id="Q65L74"/>
<dbReference type="STRING" id="279010.BL02661"/>
<dbReference type="KEGG" id="bld:BLi01284"/>
<dbReference type="KEGG" id="bli:BL02661"/>
<dbReference type="eggNOG" id="COG1514">
    <property type="taxonomic scope" value="Bacteria"/>
</dbReference>
<dbReference type="HOGENOM" id="CLU_132020_0_0_9"/>
<dbReference type="Proteomes" id="UP000000606">
    <property type="component" value="Chromosome"/>
</dbReference>
<dbReference type="GO" id="GO:0016788">
    <property type="term" value="F:hydrolase activity, acting on ester bonds"/>
    <property type="evidence" value="ECO:0007669"/>
    <property type="project" value="UniProtKB-UniRule"/>
</dbReference>
<dbReference type="Gene3D" id="3.90.1140.10">
    <property type="entry name" value="Cyclic phosphodiesterase"/>
    <property type="match status" value="1"/>
</dbReference>
<dbReference type="HAMAP" id="MF_01444">
    <property type="entry name" value="2H_phosphoesterase_YjcG"/>
    <property type="match status" value="1"/>
</dbReference>
<dbReference type="InterPro" id="IPR050580">
    <property type="entry name" value="2H_phosphoesterase_YjcG-like"/>
</dbReference>
<dbReference type="InterPro" id="IPR009097">
    <property type="entry name" value="Cyclic_Pdiesterase"/>
</dbReference>
<dbReference type="InterPro" id="IPR022932">
    <property type="entry name" value="YjcG"/>
</dbReference>
<dbReference type="NCBIfam" id="NF010223">
    <property type="entry name" value="PRK13679.1"/>
    <property type="match status" value="1"/>
</dbReference>
<dbReference type="PANTHER" id="PTHR40037:SF1">
    <property type="entry name" value="PHOSPHOESTERASE SAOUHSC_00951-RELATED"/>
    <property type="match status" value="1"/>
</dbReference>
<dbReference type="PANTHER" id="PTHR40037">
    <property type="entry name" value="PHOSPHOESTERASE YJCG-RELATED"/>
    <property type="match status" value="1"/>
</dbReference>
<dbReference type="Pfam" id="PF13563">
    <property type="entry name" value="2_5_RNA_ligase2"/>
    <property type="match status" value="1"/>
</dbReference>
<dbReference type="SUPFAM" id="SSF55144">
    <property type="entry name" value="LigT-like"/>
    <property type="match status" value="1"/>
</dbReference>
<reference key="1">
    <citation type="journal article" date="2004" name="J. Mol. Microbiol. Biotechnol.">
        <title>The complete genome sequence of Bacillus licheniformis DSM13, an organism with great industrial potential.</title>
        <authorList>
            <person name="Veith B."/>
            <person name="Herzberg C."/>
            <person name="Steckel S."/>
            <person name="Feesche J."/>
            <person name="Maurer K.H."/>
            <person name="Ehrenreich P."/>
            <person name="Baeumer S."/>
            <person name="Henne A."/>
            <person name="Liesegang H."/>
            <person name="Merkl R."/>
            <person name="Ehrenreich A."/>
            <person name="Gottschalk G."/>
        </authorList>
    </citation>
    <scope>NUCLEOTIDE SEQUENCE [LARGE SCALE GENOMIC DNA]</scope>
    <source>
        <strain>ATCC 14580 / DSM 13 / JCM 2505 / CCUG 7422 / NBRC 12200 / NCIMB 9375 / NCTC 10341 / NRRL NRS-1264 / Gibson 46</strain>
    </source>
</reference>
<reference key="2">
    <citation type="journal article" date="2004" name="Genome Biol.">
        <title>Complete genome sequence of the industrial bacterium Bacillus licheniformis and comparisons with closely related Bacillus species.</title>
        <authorList>
            <person name="Rey M.W."/>
            <person name="Ramaiya P."/>
            <person name="Nelson B.A."/>
            <person name="Brody-Karpin S.D."/>
            <person name="Zaretsky E.J."/>
            <person name="Tang M."/>
            <person name="Lopez de Leon A."/>
            <person name="Xiang H."/>
            <person name="Gusti V."/>
            <person name="Clausen I.G."/>
            <person name="Olsen P.B."/>
            <person name="Rasmussen M.D."/>
            <person name="Andersen J.T."/>
            <person name="Joergensen P.L."/>
            <person name="Larsen T.S."/>
            <person name="Sorokin A."/>
            <person name="Bolotin A."/>
            <person name="Lapidus A."/>
            <person name="Galleron N."/>
            <person name="Ehrlich S.D."/>
            <person name="Berka R.M."/>
        </authorList>
    </citation>
    <scope>NUCLEOTIDE SEQUENCE [LARGE SCALE GENOMIC DNA]</scope>
    <source>
        <strain>ATCC 14580 / DSM 13 / JCM 2505 / CCUG 7422 / NBRC 12200 / NCIMB 9375 / NCTC 10341 / NRRL NRS-1264 / Gibson 46</strain>
    </source>
</reference>
<name>Y1284_BACLD</name>
<proteinExistence type="inferred from homology"/>
<accession>Q65L74</accession>
<accession>Q62WL3</accession>
<comment type="similarity">
    <text evidence="1">Belongs to the 2H phosphoesterase superfamily. YjcG family.</text>
</comment>
<sequence length="169" mass="19529">MKYGIVLFPSKKLQDIANSYRKRYDPNYALIPPHLTLRTPFEVSEDEISGVVRHLRELSKELKPVTLKITKFSSFAPVNNVIYMKAEPTEELMQLHEKMYSGVLEDKPEYAFVPHVTVAQKLSDDEHSDVLGTLKMRDASHEEVIDRFHLLYQLDNGSWTVYETFILGA</sequence>
<keyword id="KW-0378">Hydrolase</keyword>
<keyword id="KW-1185">Reference proteome</keyword>